<name>RS2_BURP0</name>
<keyword id="KW-0687">Ribonucleoprotein</keyword>
<keyword id="KW-0689">Ribosomal protein</keyword>
<accession>A3NWN1</accession>
<gene>
    <name evidence="1" type="primary">rpsB</name>
    <name type="ordered locus">BURPS1106A_2493</name>
</gene>
<proteinExistence type="inferred from homology"/>
<evidence type="ECO:0000255" key="1">
    <source>
        <dbReference type="HAMAP-Rule" id="MF_00291"/>
    </source>
</evidence>
<evidence type="ECO:0000305" key="2"/>
<sequence>MAITMRQMLEAGVHFGHQTRFWNPKMAPFIFGHRNKIHIINLEKTLPMYNDALKYVRQLAANRGTILFVGTKRQSRDTIAQEALRAGMPYVNARWLGGMLTNFKTLKVSIKRLKDMEAAVEAGELEKMSKKEALLFEREIAKLQKSIGGVKDMGGIPDAIFVVDVGYHKIAVTEANKLGVPVIAVVDTNHSPEGVDYVIPGNDDSSKAVALYAQGVADAILEGRANAVNEVVQAVRGDDEYVEENA</sequence>
<organism>
    <name type="scientific">Burkholderia pseudomallei (strain 1106a)</name>
    <dbReference type="NCBI Taxonomy" id="357348"/>
    <lineage>
        <taxon>Bacteria</taxon>
        <taxon>Pseudomonadati</taxon>
        <taxon>Pseudomonadota</taxon>
        <taxon>Betaproteobacteria</taxon>
        <taxon>Burkholderiales</taxon>
        <taxon>Burkholderiaceae</taxon>
        <taxon>Burkholderia</taxon>
        <taxon>pseudomallei group</taxon>
    </lineage>
</organism>
<reference key="1">
    <citation type="journal article" date="2010" name="Genome Biol. Evol.">
        <title>Continuing evolution of Burkholderia mallei through genome reduction and large-scale rearrangements.</title>
        <authorList>
            <person name="Losada L."/>
            <person name="Ronning C.M."/>
            <person name="DeShazer D."/>
            <person name="Woods D."/>
            <person name="Fedorova N."/>
            <person name="Kim H.S."/>
            <person name="Shabalina S.A."/>
            <person name="Pearson T.R."/>
            <person name="Brinkac L."/>
            <person name="Tan P."/>
            <person name="Nandi T."/>
            <person name="Crabtree J."/>
            <person name="Badger J."/>
            <person name="Beckstrom-Sternberg S."/>
            <person name="Saqib M."/>
            <person name="Schutzer S.E."/>
            <person name="Keim P."/>
            <person name="Nierman W.C."/>
        </authorList>
    </citation>
    <scope>NUCLEOTIDE SEQUENCE [LARGE SCALE GENOMIC DNA]</scope>
    <source>
        <strain>1106a</strain>
    </source>
</reference>
<protein>
    <recommendedName>
        <fullName evidence="1">Small ribosomal subunit protein uS2</fullName>
    </recommendedName>
    <alternativeName>
        <fullName evidence="2">30S ribosomal protein S2</fullName>
    </alternativeName>
</protein>
<comment type="similarity">
    <text evidence="1">Belongs to the universal ribosomal protein uS2 family.</text>
</comment>
<feature type="chain" id="PRO_1000003912" description="Small ribosomal subunit protein uS2">
    <location>
        <begin position="1"/>
        <end position="246"/>
    </location>
</feature>
<dbReference type="EMBL" id="CP000572">
    <property type="protein sequence ID" value="ABN91514.1"/>
    <property type="molecule type" value="Genomic_DNA"/>
</dbReference>
<dbReference type="RefSeq" id="WP_004193246.1">
    <property type="nucleotide sequence ID" value="NC_009076.1"/>
</dbReference>
<dbReference type="SMR" id="A3NWN1"/>
<dbReference type="GeneID" id="93060700"/>
<dbReference type="KEGG" id="bpl:BURPS1106A_2493"/>
<dbReference type="HOGENOM" id="CLU_040318_1_2_4"/>
<dbReference type="Proteomes" id="UP000006738">
    <property type="component" value="Chromosome I"/>
</dbReference>
<dbReference type="GO" id="GO:0022627">
    <property type="term" value="C:cytosolic small ribosomal subunit"/>
    <property type="evidence" value="ECO:0007669"/>
    <property type="project" value="TreeGrafter"/>
</dbReference>
<dbReference type="GO" id="GO:0003735">
    <property type="term" value="F:structural constituent of ribosome"/>
    <property type="evidence" value="ECO:0007669"/>
    <property type="project" value="InterPro"/>
</dbReference>
<dbReference type="GO" id="GO:0006412">
    <property type="term" value="P:translation"/>
    <property type="evidence" value="ECO:0007669"/>
    <property type="project" value="UniProtKB-UniRule"/>
</dbReference>
<dbReference type="CDD" id="cd01425">
    <property type="entry name" value="RPS2"/>
    <property type="match status" value="1"/>
</dbReference>
<dbReference type="FunFam" id="1.10.287.610:FF:000001">
    <property type="entry name" value="30S ribosomal protein S2"/>
    <property type="match status" value="1"/>
</dbReference>
<dbReference type="Gene3D" id="3.40.50.10490">
    <property type="entry name" value="Glucose-6-phosphate isomerase like protein, domain 1"/>
    <property type="match status" value="1"/>
</dbReference>
<dbReference type="Gene3D" id="1.10.287.610">
    <property type="entry name" value="Helix hairpin bin"/>
    <property type="match status" value="1"/>
</dbReference>
<dbReference type="HAMAP" id="MF_00291_B">
    <property type="entry name" value="Ribosomal_uS2_B"/>
    <property type="match status" value="1"/>
</dbReference>
<dbReference type="InterPro" id="IPR001865">
    <property type="entry name" value="Ribosomal_uS2"/>
</dbReference>
<dbReference type="InterPro" id="IPR005706">
    <property type="entry name" value="Ribosomal_uS2_bac/mit/plastid"/>
</dbReference>
<dbReference type="InterPro" id="IPR018130">
    <property type="entry name" value="Ribosomal_uS2_CS"/>
</dbReference>
<dbReference type="InterPro" id="IPR023591">
    <property type="entry name" value="Ribosomal_uS2_flav_dom_sf"/>
</dbReference>
<dbReference type="NCBIfam" id="TIGR01011">
    <property type="entry name" value="rpsB_bact"/>
    <property type="match status" value="1"/>
</dbReference>
<dbReference type="PANTHER" id="PTHR12534">
    <property type="entry name" value="30S RIBOSOMAL PROTEIN S2 PROKARYOTIC AND ORGANELLAR"/>
    <property type="match status" value="1"/>
</dbReference>
<dbReference type="PANTHER" id="PTHR12534:SF0">
    <property type="entry name" value="SMALL RIBOSOMAL SUBUNIT PROTEIN US2M"/>
    <property type="match status" value="1"/>
</dbReference>
<dbReference type="Pfam" id="PF00318">
    <property type="entry name" value="Ribosomal_S2"/>
    <property type="match status" value="1"/>
</dbReference>
<dbReference type="PRINTS" id="PR00395">
    <property type="entry name" value="RIBOSOMALS2"/>
</dbReference>
<dbReference type="SUPFAM" id="SSF52313">
    <property type="entry name" value="Ribosomal protein S2"/>
    <property type="match status" value="1"/>
</dbReference>
<dbReference type="PROSITE" id="PS00962">
    <property type="entry name" value="RIBOSOMAL_S2_1"/>
    <property type="match status" value="1"/>
</dbReference>